<evidence type="ECO:0000255" key="1">
    <source>
        <dbReference type="HAMAP-Rule" id="MF_01367"/>
    </source>
</evidence>
<evidence type="ECO:0000305" key="2"/>
<name>RL14_PYRAE</name>
<accession>Q8ZTR0</accession>
<gene>
    <name evidence="1" type="primary">rpl14</name>
    <name type="ordered locus">PAE3136</name>
</gene>
<keyword id="KW-1185">Reference proteome</keyword>
<keyword id="KW-0687">Ribonucleoprotein</keyword>
<keyword id="KW-0689">Ribosomal protein</keyword>
<keyword id="KW-0694">RNA-binding</keyword>
<keyword id="KW-0699">rRNA-binding</keyword>
<protein>
    <recommendedName>
        <fullName evidence="1">Large ribosomal subunit protein uL14</fullName>
    </recommendedName>
    <alternativeName>
        <fullName evidence="2">50S ribosomal protein L14</fullName>
    </alternativeName>
</protein>
<reference key="1">
    <citation type="journal article" date="2002" name="Proc. Natl. Acad. Sci. U.S.A.">
        <title>Genome sequence of the hyperthermophilic crenarchaeon Pyrobaculum aerophilum.</title>
        <authorList>
            <person name="Fitz-Gibbon S.T."/>
            <person name="Ladner H."/>
            <person name="Kim U.-J."/>
            <person name="Stetter K.O."/>
            <person name="Simon M.I."/>
            <person name="Miller J.H."/>
        </authorList>
    </citation>
    <scope>NUCLEOTIDE SEQUENCE [LARGE SCALE GENOMIC DNA]</scope>
    <source>
        <strain>ATCC 51768 / DSM 7523 / JCM 9630 / CIP 104966 / NBRC 100827 / IM2</strain>
    </source>
</reference>
<proteinExistence type="inferred from homology"/>
<comment type="function">
    <text evidence="1">Binds to 23S rRNA. Forms part of two intersubunit bridges in the 70S ribosome.</text>
</comment>
<comment type="subunit">
    <text evidence="1">Part of the 50S ribosomal subunit. Forms a cluster with proteins L3 and L24e, part of which may contact the 16S rRNA in 2 intersubunit bridges.</text>
</comment>
<comment type="similarity">
    <text evidence="1">Belongs to the universal ribosomal protein uL14 family.</text>
</comment>
<sequence>MAKRGGKRTVGVPYRFHVTPGIFMNSLVPVADNSGAKLVRVIGVVGHYSKTVHRRIPGAGVGDMVVVVVREGKPELRKQIFRAIVVRQRRPYRRPDGTWVAFEDNAVVIVTPEGDPKGSEIHGPVAMEATLRWPTIANLASIVV</sequence>
<feature type="chain" id="PRO_0000266611" description="Large ribosomal subunit protein uL14">
    <location>
        <begin position="1"/>
        <end position="144"/>
    </location>
</feature>
<organism>
    <name type="scientific">Pyrobaculum aerophilum (strain ATCC 51768 / DSM 7523 / JCM 9630 / CIP 104966 / NBRC 100827 / IM2)</name>
    <dbReference type="NCBI Taxonomy" id="178306"/>
    <lineage>
        <taxon>Archaea</taxon>
        <taxon>Thermoproteota</taxon>
        <taxon>Thermoprotei</taxon>
        <taxon>Thermoproteales</taxon>
        <taxon>Thermoproteaceae</taxon>
        <taxon>Pyrobaculum</taxon>
    </lineage>
</organism>
<dbReference type="EMBL" id="AE009441">
    <property type="protein sequence ID" value="AAL64699.1"/>
    <property type="molecule type" value="Genomic_DNA"/>
</dbReference>
<dbReference type="SMR" id="Q8ZTR0"/>
<dbReference type="FunCoup" id="Q8ZTR0">
    <property type="interactions" value="228"/>
</dbReference>
<dbReference type="STRING" id="178306.PAE3136"/>
<dbReference type="EnsemblBacteria" id="AAL64699">
    <property type="protein sequence ID" value="AAL64699"/>
    <property type="gene ID" value="PAE3136"/>
</dbReference>
<dbReference type="KEGG" id="pai:PAE3136"/>
<dbReference type="PATRIC" id="fig|178306.9.peg.2358"/>
<dbReference type="eggNOG" id="arCOG04095">
    <property type="taxonomic scope" value="Archaea"/>
</dbReference>
<dbReference type="HOGENOM" id="CLU_095071_3_0_2"/>
<dbReference type="InParanoid" id="Q8ZTR0"/>
<dbReference type="Proteomes" id="UP000002439">
    <property type="component" value="Chromosome"/>
</dbReference>
<dbReference type="GO" id="GO:0022625">
    <property type="term" value="C:cytosolic large ribosomal subunit"/>
    <property type="evidence" value="ECO:0000318"/>
    <property type="project" value="GO_Central"/>
</dbReference>
<dbReference type="GO" id="GO:0070180">
    <property type="term" value="F:large ribosomal subunit rRNA binding"/>
    <property type="evidence" value="ECO:0000318"/>
    <property type="project" value="GO_Central"/>
</dbReference>
<dbReference type="GO" id="GO:0003735">
    <property type="term" value="F:structural constituent of ribosome"/>
    <property type="evidence" value="ECO:0000318"/>
    <property type="project" value="GO_Central"/>
</dbReference>
<dbReference type="GO" id="GO:0006412">
    <property type="term" value="P:translation"/>
    <property type="evidence" value="ECO:0007669"/>
    <property type="project" value="UniProtKB-UniRule"/>
</dbReference>
<dbReference type="CDD" id="cd00337">
    <property type="entry name" value="Ribosomal_uL14"/>
    <property type="match status" value="1"/>
</dbReference>
<dbReference type="FunFam" id="2.40.150.20:FF:000007">
    <property type="entry name" value="50S ribosomal protein L14"/>
    <property type="match status" value="1"/>
</dbReference>
<dbReference type="Gene3D" id="2.40.150.20">
    <property type="entry name" value="Ribosomal protein L14"/>
    <property type="match status" value="1"/>
</dbReference>
<dbReference type="HAMAP" id="MF_01367">
    <property type="entry name" value="Ribosomal_uL14"/>
    <property type="match status" value="1"/>
</dbReference>
<dbReference type="InterPro" id="IPR000218">
    <property type="entry name" value="Ribosomal_uL14"/>
</dbReference>
<dbReference type="InterPro" id="IPR019971">
    <property type="entry name" value="Ribosomal_uL14_arc"/>
</dbReference>
<dbReference type="InterPro" id="IPR019972">
    <property type="entry name" value="Ribosomal_uL14_CS"/>
</dbReference>
<dbReference type="InterPro" id="IPR036853">
    <property type="entry name" value="Ribosomal_uL14_sf"/>
</dbReference>
<dbReference type="NCBIfam" id="NF006344">
    <property type="entry name" value="PRK08571.1"/>
    <property type="match status" value="1"/>
</dbReference>
<dbReference type="NCBIfam" id="TIGR03673">
    <property type="entry name" value="uL14_arch"/>
    <property type="match status" value="1"/>
</dbReference>
<dbReference type="PANTHER" id="PTHR11761">
    <property type="entry name" value="50S/60S RIBOSOMAL PROTEIN L14/L23"/>
    <property type="match status" value="1"/>
</dbReference>
<dbReference type="PANTHER" id="PTHR11761:SF8">
    <property type="entry name" value="LARGE RIBOSOMAL SUBUNIT PROTEIN UL14"/>
    <property type="match status" value="1"/>
</dbReference>
<dbReference type="Pfam" id="PF00238">
    <property type="entry name" value="Ribosomal_L14"/>
    <property type="match status" value="1"/>
</dbReference>
<dbReference type="SMART" id="SM01374">
    <property type="entry name" value="Ribosomal_L14"/>
    <property type="match status" value="1"/>
</dbReference>
<dbReference type="SUPFAM" id="SSF50193">
    <property type="entry name" value="Ribosomal protein L14"/>
    <property type="match status" value="1"/>
</dbReference>
<dbReference type="PROSITE" id="PS00049">
    <property type="entry name" value="RIBOSOMAL_L14"/>
    <property type="match status" value="1"/>
</dbReference>